<reference key="1">
    <citation type="journal article" date="2007" name="PLoS Genet.">
        <title>Patterns and implications of gene gain and loss in the evolution of Prochlorococcus.</title>
        <authorList>
            <person name="Kettler G.C."/>
            <person name="Martiny A.C."/>
            <person name="Huang K."/>
            <person name="Zucker J."/>
            <person name="Coleman M.L."/>
            <person name="Rodrigue S."/>
            <person name="Chen F."/>
            <person name="Lapidus A."/>
            <person name="Ferriera S."/>
            <person name="Johnson J."/>
            <person name="Steglich C."/>
            <person name="Church G.M."/>
            <person name="Richardson P."/>
            <person name="Chisholm S.W."/>
        </authorList>
    </citation>
    <scope>NUCLEOTIDE SEQUENCE [LARGE SCALE GENOMIC DNA]</scope>
    <source>
        <strain>NATL1A</strain>
    </source>
</reference>
<comment type="catalytic activity">
    <reaction evidence="1">
        <text>urea + 2 H2O + H(+) = hydrogencarbonate + 2 NH4(+)</text>
        <dbReference type="Rhea" id="RHEA:20557"/>
        <dbReference type="ChEBI" id="CHEBI:15377"/>
        <dbReference type="ChEBI" id="CHEBI:15378"/>
        <dbReference type="ChEBI" id="CHEBI:16199"/>
        <dbReference type="ChEBI" id="CHEBI:17544"/>
        <dbReference type="ChEBI" id="CHEBI:28938"/>
        <dbReference type="EC" id="3.5.1.5"/>
    </reaction>
</comment>
<comment type="pathway">
    <text evidence="1">Nitrogen metabolism; urea degradation; CO(2) and NH(3) from urea (urease route): step 1/1.</text>
</comment>
<comment type="subunit">
    <text evidence="1">Heterotrimer of UreA (gamma), UreB (beta) and UreC (alpha) subunits. Three heterotrimers associate to form the active enzyme.</text>
</comment>
<comment type="subcellular location">
    <subcellularLocation>
        <location evidence="1">Cytoplasm</location>
    </subcellularLocation>
</comment>
<comment type="similarity">
    <text evidence="1">Belongs to the urease beta subunit family.</text>
</comment>
<accession>A2C4S1</accession>
<evidence type="ECO:0000255" key="1">
    <source>
        <dbReference type="HAMAP-Rule" id="MF_01954"/>
    </source>
</evidence>
<proteinExistence type="inferred from homology"/>
<dbReference type="EC" id="3.5.1.5" evidence="1"/>
<dbReference type="EMBL" id="CP000553">
    <property type="protein sequence ID" value="ABM76481.1"/>
    <property type="molecule type" value="Genomic_DNA"/>
</dbReference>
<dbReference type="RefSeq" id="WP_011295399.1">
    <property type="nucleotide sequence ID" value="NC_008819.1"/>
</dbReference>
<dbReference type="SMR" id="A2C4S1"/>
<dbReference type="KEGG" id="pme:NATL1_19251"/>
<dbReference type="eggNOG" id="COG0832">
    <property type="taxonomic scope" value="Bacteria"/>
</dbReference>
<dbReference type="HOGENOM" id="CLU_129707_1_1_3"/>
<dbReference type="UniPathway" id="UPA00258">
    <property type="reaction ID" value="UER00370"/>
</dbReference>
<dbReference type="Proteomes" id="UP000002592">
    <property type="component" value="Chromosome"/>
</dbReference>
<dbReference type="GO" id="GO:0035550">
    <property type="term" value="C:urease complex"/>
    <property type="evidence" value="ECO:0007669"/>
    <property type="project" value="InterPro"/>
</dbReference>
<dbReference type="GO" id="GO:0009039">
    <property type="term" value="F:urease activity"/>
    <property type="evidence" value="ECO:0007669"/>
    <property type="project" value="UniProtKB-UniRule"/>
</dbReference>
<dbReference type="GO" id="GO:0043419">
    <property type="term" value="P:urea catabolic process"/>
    <property type="evidence" value="ECO:0007669"/>
    <property type="project" value="UniProtKB-UniRule"/>
</dbReference>
<dbReference type="CDD" id="cd00407">
    <property type="entry name" value="Urease_beta"/>
    <property type="match status" value="1"/>
</dbReference>
<dbReference type="FunFam" id="2.10.150.10:FF:000001">
    <property type="entry name" value="Urease subunit beta"/>
    <property type="match status" value="1"/>
</dbReference>
<dbReference type="Gene3D" id="2.10.150.10">
    <property type="entry name" value="Urease, beta subunit"/>
    <property type="match status" value="1"/>
</dbReference>
<dbReference type="HAMAP" id="MF_01954">
    <property type="entry name" value="Urease_beta"/>
    <property type="match status" value="1"/>
</dbReference>
<dbReference type="InterPro" id="IPR002019">
    <property type="entry name" value="Urease_beta-like"/>
</dbReference>
<dbReference type="InterPro" id="IPR036461">
    <property type="entry name" value="Urease_betasu_sf"/>
</dbReference>
<dbReference type="InterPro" id="IPR050069">
    <property type="entry name" value="Urease_subunit"/>
</dbReference>
<dbReference type="NCBIfam" id="NF009682">
    <property type="entry name" value="PRK13203.1"/>
    <property type="match status" value="1"/>
</dbReference>
<dbReference type="NCBIfam" id="TIGR00192">
    <property type="entry name" value="urease_beta"/>
    <property type="match status" value="1"/>
</dbReference>
<dbReference type="PANTHER" id="PTHR33569">
    <property type="entry name" value="UREASE"/>
    <property type="match status" value="1"/>
</dbReference>
<dbReference type="PANTHER" id="PTHR33569:SF1">
    <property type="entry name" value="UREASE"/>
    <property type="match status" value="1"/>
</dbReference>
<dbReference type="Pfam" id="PF00699">
    <property type="entry name" value="Urease_beta"/>
    <property type="match status" value="1"/>
</dbReference>
<dbReference type="SUPFAM" id="SSF51278">
    <property type="entry name" value="Urease, beta-subunit"/>
    <property type="match status" value="1"/>
</dbReference>
<feature type="chain" id="PRO_1000070754" description="Urease subunit beta">
    <location>
        <begin position="1"/>
        <end position="106"/>
    </location>
</feature>
<organism>
    <name type="scientific">Prochlorococcus marinus (strain NATL1A)</name>
    <dbReference type="NCBI Taxonomy" id="167555"/>
    <lineage>
        <taxon>Bacteria</taxon>
        <taxon>Bacillati</taxon>
        <taxon>Cyanobacteriota</taxon>
        <taxon>Cyanophyceae</taxon>
        <taxon>Synechococcales</taxon>
        <taxon>Prochlorococcaceae</taxon>
        <taxon>Prochlorococcus</taxon>
    </lineage>
</organism>
<keyword id="KW-0963">Cytoplasm</keyword>
<keyword id="KW-0378">Hydrolase</keyword>
<protein>
    <recommendedName>
        <fullName evidence="1">Urease subunit beta</fullName>
        <ecNumber evidence="1">3.5.1.5</ecNumber>
    </recommendedName>
    <alternativeName>
        <fullName evidence="1">Urea amidohydrolase subunit beta</fullName>
    </alternativeName>
</protein>
<name>URE2_PROM1</name>
<gene>
    <name evidence="1" type="primary">ureB</name>
    <name type="ordered locus">NATL1_19251</name>
</gene>
<sequence>MSYLIPGELIPEDGFIELNKGRETTTLKVANTSDRPIQIGSHYHFFESNKGLEFDRKKSLGKRLDIPAGTAIRFEPGDQREVNLVPYAGDRKIFGFNGLINNSLQQ</sequence>